<gene>
    <name evidence="1" type="primary">guaA</name>
    <name type="ordered locus">Tbd_1751</name>
</gene>
<evidence type="ECO:0000255" key="1">
    <source>
        <dbReference type="HAMAP-Rule" id="MF_00344"/>
    </source>
</evidence>
<name>GUAA_THIDA</name>
<accession>Q3SI29</accession>
<protein>
    <recommendedName>
        <fullName evidence="1">GMP synthase [glutamine-hydrolyzing]</fullName>
        <ecNumber evidence="1">6.3.5.2</ecNumber>
    </recommendedName>
    <alternativeName>
        <fullName evidence="1">GMP synthetase</fullName>
    </alternativeName>
    <alternativeName>
        <fullName evidence="1">Glutamine amidotransferase</fullName>
    </alternativeName>
</protein>
<feature type="chain" id="PRO_0000229482" description="GMP synthase [glutamine-hydrolyzing]">
    <location>
        <begin position="1"/>
        <end position="520"/>
    </location>
</feature>
<feature type="domain" description="Glutamine amidotransferase type-1" evidence="1">
    <location>
        <begin position="4"/>
        <end position="202"/>
    </location>
</feature>
<feature type="domain" description="GMPS ATP-PPase" evidence="1">
    <location>
        <begin position="203"/>
        <end position="395"/>
    </location>
</feature>
<feature type="active site" description="Nucleophile" evidence="1">
    <location>
        <position position="81"/>
    </location>
</feature>
<feature type="active site" evidence="1">
    <location>
        <position position="176"/>
    </location>
</feature>
<feature type="active site" evidence="1">
    <location>
        <position position="178"/>
    </location>
</feature>
<feature type="binding site" evidence="1">
    <location>
        <begin position="230"/>
        <end position="236"/>
    </location>
    <ligand>
        <name>ATP</name>
        <dbReference type="ChEBI" id="CHEBI:30616"/>
    </ligand>
</feature>
<organism>
    <name type="scientific">Thiobacillus denitrificans (strain ATCC 25259 / T1)</name>
    <dbReference type="NCBI Taxonomy" id="292415"/>
    <lineage>
        <taxon>Bacteria</taxon>
        <taxon>Pseudomonadati</taxon>
        <taxon>Pseudomonadota</taxon>
        <taxon>Betaproteobacteria</taxon>
        <taxon>Nitrosomonadales</taxon>
        <taxon>Thiobacillaceae</taxon>
        <taxon>Thiobacillus</taxon>
    </lineage>
</organism>
<keyword id="KW-0067">ATP-binding</keyword>
<keyword id="KW-0315">Glutamine amidotransferase</keyword>
<keyword id="KW-0332">GMP biosynthesis</keyword>
<keyword id="KW-0436">Ligase</keyword>
<keyword id="KW-0547">Nucleotide-binding</keyword>
<keyword id="KW-0658">Purine biosynthesis</keyword>
<keyword id="KW-1185">Reference proteome</keyword>
<comment type="function">
    <text evidence="1">Catalyzes the synthesis of GMP from XMP.</text>
</comment>
<comment type="catalytic activity">
    <reaction evidence="1">
        <text>XMP + L-glutamine + ATP + H2O = GMP + L-glutamate + AMP + diphosphate + 2 H(+)</text>
        <dbReference type="Rhea" id="RHEA:11680"/>
        <dbReference type="ChEBI" id="CHEBI:15377"/>
        <dbReference type="ChEBI" id="CHEBI:15378"/>
        <dbReference type="ChEBI" id="CHEBI:29985"/>
        <dbReference type="ChEBI" id="CHEBI:30616"/>
        <dbReference type="ChEBI" id="CHEBI:33019"/>
        <dbReference type="ChEBI" id="CHEBI:57464"/>
        <dbReference type="ChEBI" id="CHEBI:58115"/>
        <dbReference type="ChEBI" id="CHEBI:58359"/>
        <dbReference type="ChEBI" id="CHEBI:456215"/>
        <dbReference type="EC" id="6.3.5.2"/>
    </reaction>
</comment>
<comment type="pathway">
    <text evidence="1">Purine metabolism; GMP biosynthesis; GMP from XMP (L-Gln route): step 1/1.</text>
</comment>
<comment type="subunit">
    <text evidence="1">Homodimer.</text>
</comment>
<proteinExistence type="inferred from homology"/>
<sequence length="520" mass="57704">MHQKILILDFGSQYTQLIARRVREAGVYCELHPNDVSEDFVREFAPQGIILSGGPNSVYEDETPRAPDVVFTLGVPVLGICYGMQTMAAQLGGAVESAAKREFGYAEIRARGHTQLLRDIQDRVTGEGHGMLDVWMSHGDKVTALPEGFKLMASNAATPIAGMADEARRFYGVQFHPEVTHTLQGKHILNRFVHDICGCGSDWNMPDYVEEAIGKVRSEVGSDEVILGLSGGVDSSVVAALLHRAVGDQLTCVFVDNGLLRLNEAEQVMETFAQNLGVKVIHVDATERFMRELAGVSDPEQKRKIIGREFVHVFQEEAEKLPKAKWLAQGTIYPDVIESASAKTKKAHTIKSHHNVGGLPETLHLQLLEPLRELFKDEVRELGIALGLPHDMVYRHPFPGPGLGVRILGKVKREYADLLRRADAIFIEELRASGWYEKTSQAFTVFLPVKSVGVMGDGRTYDYVVALRAVQTQDFMTAHWAELPYTLLGKVSNRIINEVRGINRVVYDVSGKPPATIEWE</sequence>
<reference key="1">
    <citation type="journal article" date="2006" name="J. Bacteriol.">
        <title>The genome sequence of the obligately chemolithoautotrophic, facultatively anaerobic bacterium Thiobacillus denitrificans.</title>
        <authorList>
            <person name="Beller H.R."/>
            <person name="Chain P.S."/>
            <person name="Letain T.E."/>
            <person name="Chakicherla A."/>
            <person name="Larimer F.W."/>
            <person name="Richardson P.M."/>
            <person name="Coleman M.A."/>
            <person name="Wood A.P."/>
            <person name="Kelly D.P."/>
        </authorList>
    </citation>
    <scope>NUCLEOTIDE SEQUENCE [LARGE SCALE GENOMIC DNA]</scope>
    <source>
        <strain>ATCC 25259 / T1</strain>
    </source>
</reference>
<dbReference type="EC" id="6.3.5.2" evidence="1"/>
<dbReference type="EMBL" id="CP000116">
    <property type="protein sequence ID" value="AAZ97704.1"/>
    <property type="molecule type" value="Genomic_DNA"/>
</dbReference>
<dbReference type="RefSeq" id="WP_011312263.1">
    <property type="nucleotide sequence ID" value="NC_007404.1"/>
</dbReference>
<dbReference type="SMR" id="Q3SI29"/>
<dbReference type="STRING" id="292415.Tbd_1751"/>
<dbReference type="KEGG" id="tbd:Tbd_1751"/>
<dbReference type="eggNOG" id="COG0518">
    <property type="taxonomic scope" value="Bacteria"/>
</dbReference>
<dbReference type="eggNOG" id="COG0519">
    <property type="taxonomic scope" value="Bacteria"/>
</dbReference>
<dbReference type="HOGENOM" id="CLU_014340_0_5_4"/>
<dbReference type="OrthoDB" id="9802219at2"/>
<dbReference type="UniPathway" id="UPA00189">
    <property type="reaction ID" value="UER00296"/>
</dbReference>
<dbReference type="Proteomes" id="UP000008291">
    <property type="component" value="Chromosome"/>
</dbReference>
<dbReference type="GO" id="GO:0005829">
    <property type="term" value="C:cytosol"/>
    <property type="evidence" value="ECO:0007669"/>
    <property type="project" value="TreeGrafter"/>
</dbReference>
<dbReference type="GO" id="GO:0005524">
    <property type="term" value="F:ATP binding"/>
    <property type="evidence" value="ECO:0007669"/>
    <property type="project" value="UniProtKB-UniRule"/>
</dbReference>
<dbReference type="GO" id="GO:0003921">
    <property type="term" value="F:GMP synthase activity"/>
    <property type="evidence" value="ECO:0007669"/>
    <property type="project" value="InterPro"/>
</dbReference>
<dbReference type="CDD" id="cd01742">
    <property type="entry name" value="GATase1_GMP_Synthase"/>
    <property type="match status" value="1"/>
</dbReference>
<dbReference type="CDD" id="cd01997">
    <property type="entry name" value="GMP_synthase_C"/>
    <property type="match status" value="1"/>
</dbReference>
<dbReference type="FunFam" id="3.30.300.10:FF:000002">
    <property type="entry name" value="GMP synthase [glutamine-hydrolyzing]"/>
    <property type="match status" value="1"/>
</dbReference>
<dbReference type="FunFam" id="3.40.50.620:FF:000001">
    <property type="entry name" value="GMP synthase [glutamine-hydrolyzing]"/>
    <property type="match status" value="1"/>
</dbReference>
<dbReference type="FunFam" id="3.40.50.880:FF:000001">
    <property type="entry name" value="GMP synthase [glutamine-hydrolyzing]"/>
    <property type="match status" value="1"/>
</dbReference>
<dbReference type="Gene3D" id="3.30.300.10">
    <property type="match status" value="1"/>
</dbReference>
<dbReference type="Gene3D" id="3.40.50.880">
    <property type="match status" value="1"/>
</dbReference>
<dbReference type="Gene3D" id="3.40.50.620">
    <property type="entry name" value="HUPs"/>
    <property type="match status" value="1"/>
</dbReference>
<dbReference type="HAMAP" id="MF_00344">
    <property type="entry name" value="GMP_synthase"/>
    <property type="match status" value="1"/>
</dbReference>
<dbReference type="InterPro" id="IPR029062">
    <property type="entry name" value="Class_I_gatase-like"/>
</dbReference>
<dbReference type="InterPro" id="IPR017926">
    <property type="entry name" value="GATASE"/>
</dbReference>
<dbReference type="InterPro" id="IPR001674">
    <property type="entry name" value="GMP_synth_C"/>
</dbReference>
<dbReference type="InterPro" id="IPR004739">
    <property type="entry name" value="GMP_synth_GATase"/>
</dbReference>
<dbReference type="InterPro" id="IPR022955">
    <property type="entry name" value="GMP_synthase"/>
</dbReference>
<dbReference type="InterPro" id="IPR025777">
    <property type="entry name" value="GMPS_ATP_PPase_dom"/>
</dbReference>
<dbReference type="InterPro" id="IPR022310">
    <property type="entry name" value="NAD/GMP_synthase"/>
</dbReference>
<dbReference type="InterPro" id="IPR014729">
    <property type="entry name" value="Rossmann-like_a/b/a_fold"/>
</dbReference>
<dbReference type="NCBIfam" id="TIGR00884">
    <property type="entry name" value="guaA_Cterm"/>
    <property type="match status" value="1"/>
</dbReference>
<dbReference type="NCBIfam" id="TIGR00888">
    <property type="entry name" value="guaA_Nterm"/>
    <property type="match status" value="1"/>
</dbReference>
<dbReference type="NCBIfam" id="NF000848">
    <property type="entry name" value="PRK00074.1"/>
    <property type="match status" value="1"/>
</dbReference>
<dbReference type="PANTHER" id="PTHR11922:SF2">
    <property type="entry name" value="GMP SYNTHASE [GLUTAMINE-HYDROLYZING]"/>
    <property type="match status" value="1"/>
</dbReference>
<dbReference type="PANTHER" id="PTHR11922">
    <property type="entry name" value="GMP SYNTHASE-RELATED"/>
    <property type="match status" value="1"/>
</dbReference>
<dbReference type="Pfam" id="PF00117">
    <property type="entry name" value="GATase"/>
    <property type="match status" value="1"/>
</dbReference>
<dbReference type="Pfam" id="PF00958">
    <property type="entry name" value="GMP_synt_C"/>
    <property type="match status" value="1"/>
</dbReference>
<dbReference type="Pfam" id="PF02540">
    <property type="entry name" value="NAD_synthase"/>
    <property type="match status" value="1"/>
</dbReference>
<dbReference type="PRINTS" id="PR00097">
    <property type="entry name" value="ANTSNTHASEII"/>
</dbReference>
<dbReference type="PRINTS" id="PR00099">
    <property type="entry name" value="CPSGATASE"/>
</dbReference>
<dbReference type="PRINTS" id="PR00096">
    <property type="entry name" value="GATASE"/>
</dbReference>
<dbReference type="SUPFAM" id="SSF52402">
    <property type="entry name" value="Adenine nucleotide alpha hydrolases-like"/>
    <property type="match status" value="1"/>
</dbReference>
<dbReference type="SUPFAM" id="SSF52317">
    <property type="entry name" value="Class I glutamine amidotransferase-like"/>
    <property type="match status" value="1"/>
</dbReference>
<dbReference type="SUPFAM" id="SSF54810">
    <property type="entry name" value="GMP synthetase C-terminal dimerisation domain"/>
    <property type="match status" value="1"/>
</dbReference>
<dbReference type="PROSITE" id="PS51273">
    <property type="entry name" value="GATASE_TYPE_1"/>
    <property type="match status" value="1"/>
</dbReference>
<dbReference type="PROSITE" id="PS51553">
    <property type="entry name" value="GMPS_ATP_PPASE"/>
    <property type="match status" value="1"/>
</dbReference>